<comment type="catalytic activity">
    <reaction>
        <text>ATP + H2O = ADP + phosphate + H(+)</text>
        <dbReference type="Rhea" id="RHEA:13065"/>
        <dbReference type="ChEBI" id="CHEBI:15377"/>
        <dbReference type="ChEBI" id="CHEBI:15378"/>
        <dbReference type="ChEBI" id="CHEBI:30616"/>
        <dbReference type="ChEBI" id="CHEBI:43474"/>
        <dbReference type="ChEBI" id="CHEBI:456216"/>
        <dbReference type="EC" id="3.6.4.13"/>
    </reaction>
</comment>
<comment type="similarity">
    <text evidence="4">Belongs to the DEAD box helicase family. DDX23/PRP28 subfamily.</text>
</comment>
<comment type="caution">
    <text evidence="4">Lacks the conserved Q motif, which is one of the features of the DEAD box helicase family.</text>
</comment>
<comment type="caution">
    <text evidence="4">Could be the product of a pseudogene.</text>
</comment>
<comment type="sequence caution" evidence="4">
    <conflict type="erroneous initiation">
        <sequence resource="EMBL-CDS" id="AAF98437"/>
    </conflict>
    <text>Truncated N-terminus.</text>
</comment>
<gene>
    <name type="primary">RH44</name>
    <name type="ordered locus">At1g28180</name>
    <name type="ORF">F3H9.16</name>
</gene>
<evidence type="ECO:0000255" key="1">
    <source>
        <dbReference type="PROSITE-ProRule" id="PRU00541"/>
    </source>
</evidence>
<evidence type="ECO:0000255" key="2">
    <source>
        <dbReference type="PROSITE-ProRule" id="PRU00542"/>
    </source>
</evidence>
<evidence type="ECO:0000256" key="3">
    <source>
        <dbReference type="SAM" id="MobiDB-lite"/>
    </source>
</evidence>
<evidence type="ECO:0000305" key="4"/>
<accession>Q9FZ92</accession>
<accession>F4HWI1</accession>
<name>RH44_ARATH</name>
<dbReference type="EC" id="3.6.4.13"/>
<dbReference type="EMBL" id="AC021044">
    <property type="protein sequence ID" value="AAF98437.1"/>
    <property type="status" value="ALT_INIT"/>
    <property type="molecule type" value="Genomic_DNA"/>
</dbReference>
<dbReference type="EMBL" id="CP002684">
    <property type="status" value="NOT_ANNOTATED_CDS"/>
    <property type="molecule type" value="Genomic_DNA"/>
</dbReference>
<dbReference type="PIR" id="G86407">
    <property type="entry name" value="G86407"/>
</dbReference>
<dbReference type="SMR" id="Q9FZ92"/>
<dbReference type="BioGRID" id="527166">
    <property type="interactions" value="1"/>
</dbReference>
<dbReference type="FunCoup" id="Q9FZ92">
    <property type="interactions" value="3725"/>
</dbReference>
<dbReference type="STRING" id="3702.Q9FZ92"/>
<dbReference type="PaxDb" id="3702-AT1G28180.1"/>
<dbReference type="ProteomicsDB" id="236945"/>
<dbReference type="Araport" id="AT1G28180"/>
<dbReference type="TAIR" id="AT1G28180"/>
<dbReference type="eggNOG" id="KOG0333">
    <property type="taxonomic scope" value="Eukaryota"/>
</dbReference>
<dbReference type="HOGENOM" id="CLU_003041_11_2_1"/>
<dbReference type="InParanoid" id="Q9FZ92"/>
<dbReference type="OrthoDB" id="196131at2759"/>
<dbReference type="PhylomeDB" id="Q9FZ92"/>
<dbReference type="Proteomes" id="UP000006548">
    <property type="component" value="Chromosome 1"/>
</dbReference>
<dbReference type="ExpressionAtlas" id="Q9FZ92">
    <property type="expression patterns" value="baseline and differential"/>
</dbReference>
<dbReference type="GO" id="GO:0071013">
    <property type="term" value="C:catalytic step 2 spliceosome"/>
    <property type="evidence" value="ECO:0000318"/>
    <property type="project" value="GO_Central"/>
</dbReference>
<dbReference type="GO" id="GO:0005524">
    <property type="term" value="F:ATP binding"/>
    <property type="evidence" value="ECO:0007669"/>
    <property type="project" value="UniProtKB-KW"/>
</dbReference>
<dbReference type="GO" id="GO:0016887">
    <property type="term" value="F:ATP hydrolysis activity"/>
    <property type="evidence" value="ECO:0007669"/>
    <property type="project" value="RHEA"/>
</dbReference>
<dbReference type="GO" id="GO:0003729">
    <property type="term" value="F:mRNA binding"/>
    <property type="evidence" value="ECO:0000318"/>
    <property type="project" value="GO_Central"/>
</dbReference>
<dbReference type="GO" id="GO:0003724">
    <property type="term" value="F:RNA helicase activity"/>
    <property type="evidence" value="ECO:0007669"/>
    <property type="project" value="UniProtKB-EC"/>
</dbReference>
<dbReference type="GO" id="GO:0000398">
    <property type="term" value="P:mRNA splicing, via spliceosome"/>
    <property type="evidence" value="ECO:0000318"/>
    <property type="project" value="GO_Central"/>
</dbReference>
<dbReference type="CDD" id="cd17945">
    <property type="entry name" value="DEADc_DDX23"/>
    <property type="match status" value="1"/>
</dbReference>
<dbReference type="CDD" id="cd18787">
    <property type="entry name" value="SF2_C_DEAD"/>
    <property type="match status" value="1"/>
</dbReference>
<dbReference type="Gene3D" id="3.40.50.300">
    <property type="entry name" value="P-loop containing nucleotide triphosphate hydrolases"/>
    <property type="match status" value="2"/>
</dbReference>
<dbReference type="InterPro" id="IPR011545">
    <property type="entry name" value="DEAD/DEAH_box_helicase_dom"/>
</dbReference>
<dbReference type="InterPro" id="IPR014001">
    <property type="entry name" value="Helicase_ATP-bd"/>
</dbReference>
<dbReference type="InterPro" id="IPR001650">
    <property type="entry name" value="Helicase_C-like"/>
</dbReference>
<dbReference type="InterPro" id="IPR027417">
    <property type="entry name" value="P-loop_NTPase"/>
</dbReference>
<dbReference type="InterPro" id="IPR000629">
    <property type="entry name" value="RNA-helicase_DEAD-box_CS"/>
</dbReference>
<dbReference type="PANTHER" id="PTHR47958">
    <property type="entry name" value="ATP-DEPENDENT RNA HELICASE DBP3"/>
    <property type="match status" value="1"/>
</dbReference>
<dbReference type="Pfam" id="PF25430">
    <property type="entry name" value="DDX23"/>
    <property type="match status" value="1"/>
</dbReference>
<dbReference type="Pfam" id="PF00270">
    <property type="entry name" value="DEAD"/>
    <property type="match status" value="1"/>
</dbReference>
<dbReference type="Pfam" id="PF00271">
    <property type="entry name" value="Helicase_C"/>
    <property type="match status" value="1"/>
</dbReference>
<dbReference type="SMART" id="SM00487">
    <property type="entry name" value="DEXDc"/>
    <property type="match status" value="1"/>
</dbReference>
<dbReference type="SMART" id="SM00490">
    <property type="entry name" value="HELICc"/>
    <property type="match status" value="1"/>
</dbReference>
<dbReference type="SUPFAM" id="SSF52540">
    <property type="entry name" value="P-loop containing nucleoside triphosphate hydrolases"/>
    <property type="match status" value="1"/>
</dbReference>
<dbReference type="PROSITE" id="PS00039">
    <property type="entry name" value="DEAD_ATP_HELICASE"/>
    <property type="match status" value="1"/>
</dbReference>
<dbReference type="PROSITE" id="PS51192">
    <property type="entry name" value="HELICASE_ATP_BIND_1"/>
    <property type="match status" value="1"/>
</dbReference>
<dbReference type="PROSITE" id="PS51194">
    <property type="entry name" value="HELICASE_CTER"/>
    <property type="match status" value="1"/>
</dbReference>
<organism>
    <name type="scientific">Arabidopsis thaliana</name>
    <name type="common">Mouse-ear cress</name>
    <dbReference type="NCBI Taxonomy" id="3702"/>
    <lineage>
        <taxon>Eukaryota</taxon>
        <taxon>Viridiplantae</taxon>
        <taxon>Streptophyta</taxon>
        <taxon>Embryophyta</taxon>
        <taxon>Tracheophyta</taxon>
        <taxon>Spermatophyta</taxon>
        <taxon>Magnoliopsida</taxon>
        <taxon>eudicotyledons</taxon>
        <taxon>Gunneridae</taxon>
        <taxon>Pentapetalae</taxon>
        <taxon>rosids</taxon>
        <taxon>malvids</taxon>
        <taxon>Brassicales</taxon>
        <taxon>Brassicaceae</taxon>
        <taxon>Camelineae</taxon>
        <taxon>Arabidopsis</taxon>
    </lineage>
</organism>
<sequence length="622" mass="72674">MKQSFEGFMKTAMEKKTLDFDNLTKPVFLTKAHRKELALKRCQDEIADRDRRSIVQISRSNSDNDDGNRPRDVKRERHRSHDHDRNRESDREFREREVKARVEKLEMVKREKEINAMKEQYLGTTKPKKRVIMKPSKNFRFDWENTEDTLSGEMNVLYQNPHEAQPLFGRGCRAGIDRREQKKLMTGKHEREKREEEDKHWSEKKLEEMNERDWRIFKEDFNISYRGSKIPHPMRNWEETIPLGLEQRDVIGISATGSGKTAAFVLPMLAYISRLPPMREENQTEGPYALVMVPTRELAHQIEEETVKFSRYLGFKAVSITGWESIEKQALKLSQGCEIVIATPGRLLDCLERRYVVLNQCNYLVLDEADRMIDMDFEPQVSEVLDVMPCSNLKPEKEDEELEEKKIYRTTYMFSATMLLSVERLARKFLRNPVVVTIGETTKFITQQVIMTKESDKFSRLKKLIDDLGDDKTAIVFVNTRNKVDYIVKNLEKVGRCRVTTLHAGKSQEQRDYSLEEFKKKRFNVLVTTDVLGRGLDILDLAQVINYDMPNTMDLYTHRIGRTGRAGKTGVATTFLTLEDKDVFYGLKQKLNECNSLVPPELARHEASKFKPGTFPDRFSHF</sequence>
<protein>
    <recommendedName>
        <fullName>Putative DEAD-box ATP-dependent RNA helicase 44</fullName>
        <ecNumber>3.6.4.13</ecNumber>
    </recommendedName>
</protein>
<keyword id="KW-0067">ATP-binding</keyword>
<keyword id="KW-0347">Helicase</keyword>
<keyword id="KW-0378">Hydrolase</keyword>
<keyword id="KW-0547">Nucleotide-binding</keyword>
<keyword id="KW-1185">Reference proteome</keyword>
<keyword id="KW-0694">RNA-binding</keyword>
<proteinExistence type="uncertain"/>
<feature type="chain" id="PRO_0000239184" description="Putative DEAD-box ATP-dependent RNA helicase 44">
    <location>
        <begin position="1"/>
        <end position="622"/>
    </location>
</feature>
<feature type="domain" description="Helicase ATP-binding" evidence="1">
    <location>
        <begin position="241"/>
        <end position="436"/>
    </location>
</feature>
<feature type="domain" description="Helicase C-terminal" evidence="2">
    <location>
        <begin position="460"/>
        <end position="606"/>
    </location>
</feature>
<feature type="region of interest" description="Disordered" evidence="3">
    <location>
        <begin position="50"/>
        <end position="97"/>
    </location>
</feature>
<feature type="short sequence motif" description="DEAD box">
    <location>
        <begin position="367"/>
        <end position="370"/>
    </location>
</feature>
<feature type="compositionally biased region" description="Basic and acidic residues" evidence="3">
    <location>
        <begin position="66"/>
        <end position="97"/>
    </location>
</feature>
<feature type="binding site" evidence="1">
    <location>
        <begin position="254"/>
        <end position="261"/>
    </location>
    <ligand>
        <name>ATP</name>
        <dbReference type="ChEBI" id="CHEBI:30616"/>
    </ligand>
</feature>
<reference key="1">
    <citation type="journal article" date="2000" name="Nature">
        <title>Sequence and analysis of chromosome 1 of the plant Arabidopsis thaliana.</title>
        <authorList>
            <person name="Theologis A."/>
            <person name="Ecker J.R."/>
            <person name="Palm C.J."/>
            <person name="Federspiel N.A."/>
            <person name="Kaul S."/>
            <person name="White O."/>
            <person name="Alonso J."/>
            <person name="Altafi H."/>
            <person name="Araujo R."/>
            <person name="Bowman C.L."/>
            <person name="Brooks S.Y."/>
            <person name="Buehler E."/>
            <person name="Chan A."/>
            <person name="Chao Q."/>
            <person name="Chen H."/>
            <person name="Cheuk R.F."/>
            <person name="Chin C.W."/>
            <person name="Chung M.K."/>
            <person name="Conn L."/>
            <person name="Conway A.B."/>
            <person name="Conway A.R."/>
            <person name="Creasy T.H."/>
            <person name="Dewar K."/>
            <person name="Dunn P."/>
            <person name="Etgu P."/>
            <person name="Feldblyum T.V."/>
            <person name="Feng J.-D."/>
            <person name="Fong B."/>
            <person name="Fujii C.Y."/>
            <person name="Gill J.E."/>
            <person name="Goldsmith A.D."/>
            <person name="Haas B."/>
            <person name="Hansen N.F."/>
            <person name="Hughes B."/>
            <person name="Huizar L."/>
            <person name="Hunter J.L."/>
            <person name="Jenkins J."/>
            <person name="Johnson-Hopson C."/>
            <person name="Khan S."/>
            <person name="Khaykin E."/>
            <person name="Kim C.J."/>
            <person name="Koo H.L."/>
            <person name="Kremenetskaia I."/>
            <person name="Kurtz D.B."/>
            <person name="Kwan A."/>
            <person name="Lam B."/>
            <person name="Langin-Hooper S."/>
            <person name="Lee A."/>
            <person name="Lee J.M."/>
            <person name="Lenz C.A."/>
            <person name="Li J.H."/>
            <person name="Li Y.-P."/>
            <person name="Lin X."/>
            <person name="Liu S.X."/>
            <person name="Liu Z.A."/>
            <person name="Luros J.S."/>
            <person name="Maiti R."/>
            <person name="Marziali A."/>
            <person name="Militscher J."/>
            <person name="Miranda M."/>
            <person name="Nguyen M."/>
            <person name="Nierman W.C."/>
            <person name="Osborne B.I."/>
            <person name="Pai G."/>
            <person name="Peterson J."/>
            <person name="Pham P.K."/>
            <person name="Rizzo M."/>
            <person name="Rooney T."/>
            <person name="Rowley D."/>
            <person name="Sakano H."/>
            <person name="Salzberg S.L."/>
            <person name="Schwartz J.R."/>
            <person name="Shinn P."/>
            <person name="Southwick A.M."/>
            <person name="Sun H."/>
            <person name="Tallon L.J."/>
            <person name="Tambunga G."/>
            <person name="Toriumi M.J."/>
            <person name="Town C.D."/>
            <person name="Utterback T."/>
            <person name="Van Aken S."/>
            <person name="Vaysberg M."/>
            <person name="Vysotskaia V.S."/>
            <person name="Walker M."/>
            <person name="Wu D."/>
            <person name="Yu G."/>
            <person name="Fraser C.M."/>
            <person name="Venter J.C."/>
            <person name="Davis R.W."/>
        </authorList>
    </citation>
    <scope>NUCLEOTIDE SEQUENCE [LARGE SCALE GENOMIC DNA]</scope>
    <source>
        <strain>cv. Columbia</strain>
    </source>
</reference>
<reference key="2">
    <citation type="journal article" date="2017" name="Plant J.">
        <title>Araport11: a complete reannotation of the Arabidopsis thaliana reference genome.</title>
        <authorList>
            <person name="Cheng C.Y."/>
            <person name="Krishnakumar V."/>
            <person name="Chan A.P."/>
            <person name="Thibaud-Nissen F."/>
            <person name="Schobel S."/>
            <person name="Town C.D."/>
        </authorList>
    </citation>
    <scope>GENOME REANNOTATION</scope>
    <source>
        <strain>cv. Columbia</strain>
    </source>
</reference>
<reference key="3">
    <citation type="journal article" date="2004" name="Plant Biotechnol. J.">
        <title>DEAD-box RNA helicases in Arabidopsis thaliana: establishing a link between quantitative expression, gene structure and evolution of a family of genes.</title>
        <authorList>
            <person name="Mingam A."/>
            <person name="Toffano-Nioche C."/>
            <person name="Brunaud V."/>
            <person name="Boudet N."/>
            <person name="Kreis M."/>
            <person name="Lecharny A."/>
        </authorList>
    </citation>
    <scope>GENE FAMILY</scope>
    <scope>NOMENCLATURE</scope>
</reference>
<reference key="4">
    <citation type="journal article" date="2013" name="PLoS ONE">
        <title>Genome-wide comparative in silico analysis of the RNA helicase gene family in Zea mays and Glycine max: a comparison with Arabidopsis and Oryza sativa.</title>
        <authorList>
            <person name="Xu R."/>
            <person name="Zhang S."/>
            <person name="Huang J."/>
            <person name="Zheng C."/>
        </authorList>
    </citation>
    <scope>GENE FAMILY</scope>
</reference>